<comment type="catalytic activity">
    <reaction>
        <text>sn-glycerol 3-phosphate + NAD(+) = dihydroxyacetone phosphate + NADH + H(+)</text>
        <dbReference type="Rhea" id="RHEA:11092"/>
        <dbReference type="ChEBI" id="CHEBI:15378"/>
        <dbReference type="ChEBI" id="CHEBI:57540"/>
        <dbReference type="ChEBI" id="CHEBI:57597"/>
        <dbReference type="ChEBI" id="CHEBI:57642"/>
        <dbReference type="ChEBI" id="CHEBI:57945"/>
        <dbReference type="EC" id="1.1.1.8"/>
    </reaction>
</comment>
<comment type="similarity">
    <text evidence="3">Belongs to the NAD-dependent glycerol-3-phosphate dehydrogenase family.</text>
</comment>
<name>GPD_PYRO3</name>
<evidence type="ECO:0000250" key="1">
    <source>
        <dbReference type="UniProtKB" id="P21695"/>
    </source>
</evidence>
<evidence type="ECO:0000256" key="2">
    <source>
        <dbReference type="SAM" id="MobiDB-lite"/>
    </source>
</evidence>
<evidence type="ECO:0000305" key="3"/>
<proteinExistence type="evidence at transcript level"/>
<feature type="chain" id="PRO_0000423544" description="Glycerol-3-phosphate dehydrogenase [NAD(+)]">
    <location>
        <begin position="1"/>
        <end position="433"/>
    </location>
</feature>
<feature type="region of interest" description="Disordered" evidence="2">
    <location>
        <begin position="187"/>
        <end position="246"/>
    </location>
</feature>
<feature type="compositionally biased region" description="Polar residues" evidence="2">
    <location>
        <begin position="208"/>
        <end position="227"/>
    </location>
</feature>
<feature type="active site" description="Proton acceptor" evidence="1">
    <location>
        <position position="283"/>
    </location>
</feature>
<feature type="binding site" evidence="1">
    <location>
        <begin position="17"/>
        <end position="22"/>
    </location>
    <ligand>
        <name>NAD(+)</name>
        <dbReference type="ChEBI" id="CHEBI:57540"/>
    </ligand>
</feature>
<feature type="binding site" evidence="1">
    <location>
        <position position="49"/>
    </location>
    <ligand>
        <name>NAD(+)</name>
        <dbReference type="ChEBI" id="CHEBI:57540"/>
    </ligand>
</feature>
<feature type="binding site" evidence="1">
    <location>
        <position position="117"/>
    </location>
    <ligand>
        <name>NAD(+)</name>
        <dbReference type="ChEBI" id="CHEBI:57540"/>
    </ligand>
</feature>
<feature type="binding site" evidence="1">
    <location>
        <position position="140"/>
    </location>
    <ligand>
        <name>substrate</name>
    </ligand>
</feature>
<feature type="binding site" evidence="1">
    <location>
        <position position="173"/>
    </location>
    <ligand>
        <name>NAD(+)</name>
        <dbReference type="ChEBI" id="CHEBI:57540"/>
    </ligand>
</feature>
<feature type="binding site" evidence="1">
    <location>
        <begin position="349"/>
        <end position="350"/>
    </location>
    <ligand>
        <name>substrate</name>
    </ligand>
</feature>
<feature type="binding site" evidence="1">
    <location>
        <position position="349"/>
    </location>
    <ligand>
        <name>NAD(+)</name>
        <dbReference type="ChEBI" id="CHEBI:57540"/>
    </ligand>
</feature>
<feature type="binding site" evidence="1">
    <location>
        <position position="378"/>
    </location>
    <ligand>
        <name>NAD(+)</name>
        <dbReference type="ChEBI" id="CHEBI:57540"/>
    </ligand>
</feature>
<feature type="sequence conflict" description="In Ref. 1; AAW69311." evidence="3" ref="1">
    <original>G</original>
    <variation>E</variation>
    <location>
        <position position="254"/>
    </location>
</feature>
<organism>
    <name type="scientific">Pyricularia oryzae (strain Y34)</name>
    <name type="common">Rice blast fungus</name>
    <name type="synonym">Magnaporthe oryzae</name>
    <dbReference type="NCBI Taxonomy" id="1143189"/>
    <lineage>
        <taxon>Eukaryota</taxon>
        <taxon>Fungi</taxon>
        <taxon>Dikarya</taxon>
        <taxon>Ascomycota</taxon>
        <taxon>Pezizomycotina</taxon>
        <taxon>Sordariomycetes</taxon>
        <taxon>Sordariomycetidae</taxon>
        <taxon>Magnaporthales</taxon>
        <taxon>Pyriculariaceae</taxon>
        <taxon>Pyricularia</taxon>
    </lineage>
</organism>
<protein>
    <recommendedName>
        <fullName>Glycerol-3-phosphate dehydrogenase [NAD(+)]</fullName>
        <ecNumber>1.1.1.8</ecNumber>
    </recommendedName>
</protein>
<sequence length="433" mass="46756">MASLGSYAKKHKVTIIGSGNWGSTIAKIVAESTREHKDVFEEDVQMWVFEEKVTIPKDSPYYESEEPQKLTEVINKHHENVKYLPGIKLPSNIIANPSLTDAVRDSSVLVFNLPHEFLGKVCQQLNGHIVPFARGISCIKGVDVSGSGINLFCEVIGEKLGIYCGALSGANVASQIAAEEGVSETTIAYDPPPIDSSRAATPRDRSPNYDSTSANKLPDLTVTSADSNGKDDRGRRTKAKLTPVPESYPPLDHGTLQILFDRPYFSVSMVSDVAGVSLSGALKNIVALAAGFVDGKGWGSNVQSAVIRVGLAEMLKFAREFFGESVDPFTILLESAGVADVITSCISGRNFRCASMAVKRGVSVAEIEEKELNGQKLQGTSTAKEVNSLLKARGREGDYPLFTTVNEILEGKARVDDLPKLVIRQKHTIEKSG</sequence>
<gene>
    <name type="ORF">OOU_Y34scaffold00217g6</name>
</gene>
<dbReference type="EC" id="1.1.1.8"/>
<dbReference type="EMBL" id="AY850305">
    <property type="protein sequence ID" value="AAW69311.1"/>
    <property type="molecule type" value="mRNA"/>
</dbReference>
<dbReference type="EMBL" id="JH793600">
    <property type="protein sequence ID" value="ELQ42264.1"/>
    <property type="molecule type" value="Genomic_DNA"/>
</dbReference>
<dbReference type="SMR" id="L7IGD3"/>
<dbReference type="OrthoDB" id="7461at147550"/>
<dbReference type="Proteomes" id="UP000011086">
    <property type="component" value="Unassembled WGS sequence"/>
</dbReference>
<dbReference type="GO" id="GO:0005829">
    <property type="term" value="C:cytosol"/>
    <property type="evidence" value="ECO:0007669"/>
    <property type="project" value="TreeGrafter"/>
</dbReference>
<dbReference type="GO" id="GO:0005634">
    <property type="term" value="C:nucleus"/>
    <property type="evidence" value="ECO:0007669"/>
    <property type="project" value="TreeGrafter"/>
</dbReference>
<dbReference type="GO" id="GO:0141152">
    <property type="term" value="F:glycerol-3-phosphate dehydrogenase (NAD+) activity"/>
    <property type="evidence" value="ECO:0007669"/>
    <property type="project" value="UniProtKB-EC"/>
</dbReference>
<dbReference type="GO" id="GO:0051287">
    <property type="term" value="F:NAD binding"/>
    <property type="evidence" value="ECO:0007669"/>
    <property type="project" value="InterPro"/>
</dbReference>
<dbReference type="GO" id="GO:0005975">
    <property type="term" value="P:carbohydrate metabolic process"/>
    <property type="evidence" value="ECO:0007669"/>
    <property type="project" value="InterPro"/>
</dbReference>
<dbReference type="GO" id="GO:0046168">
    <property type="term" value="P:glycerol-3-phosphate catabolic process"/>
    <property type="evidence" value="ECO:0007669"/>
    <property type="project" value="InterPro"/>
</dbReference>
<dbReference type="FunFam" id="1.10.1040.10:FF:000004">
    <property type="entry name" value="Glycerol-3-phosphate dehydrogenase [NAD(+)]"/>
    <property type="match status" value="1"/>
</dbReference>
<dbReference type="Gene3D" id="1.10.1040.10">
    <property type="entry name" value="N-(1-d-carboxylethyl)-l-norvaline Dehydrogenase, domain 2"/>
    <property type="match status" value="1"/>
</dbReference>
<dbReference type="Gene3D" id="3.40.50.720">
    <property type="entry name" value="NAD(P)-binding Rossmann-like Domain"/>
    <property type="match status" value="1"/>
</dbReference>
<dbReference type="InterPro" id="IPR008927">
    <property type="entry name" value="6-PGluconate_DH-like_C_sf"/>
</dbReference>
<dbReference type="InterPro" id="IPR013328">
    <property type="entry name" value="6PGD_dom2"/>
</dbReference>
<dbReference type="InterPro" id="IPR006168">
    <property type="entry name" value="G3P_DH_NAD-dep"/>
</dbReference>
<dbReference type="InterPro" id="IPR006109">
    <property type="entry name" value="G3P_DH_NAD-dep_C"/>
</dbReference>
<dbReference type="InterPro" id="IPR011128">
    <property type="entry name" value="G3P_DH_NAD-dep_N"/>
</dbReference>
<dbReference type="InterPro" id="IPR036291">
    <property type="entry name" value="NAD(P)-bd_dom_sf"/>
</dbReference>
<dbReference type="PANTHER" id="PTHR11728">
    <property type="entry name" value="GLYCEROL-3-PHOSPHATE DEHYDROGENASE"/>
    <property type="match status" value="1"/>
</dbReference>
<dbReference type="PANTHER" id="PTHR11728:SF8">
    <property type="entry name" value="GLYCEROL-3-PHOSPHATE DEHYDROGENASE [NAD(+)]-RELATED"/>
    <property type="match status" value="1"/>
</dbReference>
<dbReference type="Pfam" id="PF07479">
    <property type="entry name" value="NAD_Gly3P_dh_C"/>
    <property type="match status" value="1"/>
</dbReference>
<dbReference type="Pfam" id="PF01210">
    <property type="entry name" value="NAD_Gly3P_dh_N"/>
    <property type="match status" value="1"/>
</dbReference>
<dbReference type="PRINTS" id="PR00077">
    <property type="entry name" value="GPDHDRGNASE"/>
</dbReference>
<dbReference type="SUPFAM" id="SSF48179">
    <property type="entry name" value="6-phosphogluconate dehydrogenase C-terminal domain-like"/>
    <property type="match status" value="1"/>
</dbReference>
<dbReference type="SUPFAM" id="SSF51735">
    <property type="entry name" value="NAD(P)-binding Rossmann-fold domains"/>
    <property type="match status" value="1"/>
</dbReference>
<dbReference type="PROSITE" id="PS00957">
    <property type="entry name" value="NAD_G3PDH"/>
    <property type="match status" value="1"/>
</dbReference>
<keyword id="KW-0520">NAD</keyword>
<keyword id="KW-0560">Oxidoreductase</keyword>
<accession>L7IGD3</accession>
<accession>A4RGF7</accession>
<accession>G4NER8</accession>
<accession>Q5G5B9</accession>
<reference key="1">
    <citation type="submission" date="2004-12" db="EMBL/GenBank/DDBJ databases">
        <authorList>
            <person name="Chen B.S."/>
            <person name="Li Y.Z."/>
            <person name="Peng Y.L."/>
            <person name="Dong H.T."/>
            <person name="Li D.B."/>
        </authorList>
    </citation>
    <scope>NUCLEOTIDE SEQUENCE [MRNA]</scope>
    <source>
        <strain>Y34</strain>
    </source>
</reference>
<reference key="2">
    <citation type="journal article" date="2012" name="PLoS Genet.">
        <title>Comparative analysis of the genomes of two field isolates of the rice blast fungus Magnaporthe oryzae.</title>
        <authorList>
            <person name="Xue M."/>
            <person name="Yang J."/>
            <person name="Li Z."/>
            <person name="Hu S."/>
            <person name="Yao N."/>
            <person name="Dean R.A."/>
            <person name="Zhao W."/>
            <person name="Shen M."/>
            <person name="Zhang H."/>
            <person name="Li C."/>
            <person name="Liu L."/>
            <person name="Cao L."/>
            <person name="Xu X."/>
            <person name="Xing Y."/>
            <person name="Hsiang T."/>
            <person name="Zhang Z."/>
            <person name="Xu J.-R."/>
            <person name="Peng Y.-L."/>
        </authorList>
    </citation>
    <scope>NUCLEOTIDE SEQUENCE [LARGE SCALE GENOMIC DNA]</scope>
    <source>
        <strain>Y34</strain>
    </source>
</reference>